<reference key="1">
    <citation type="journal article" date="1974" name="J. Biol. Chem.">
        <title>Primary structure of a high potential iron-sulfur protein from the photosynthetic bacterium Thiocapsa pfennigii.</title>
        <authorList>
            <person name="Tedro S.M."/>
            <person name="Meyer T.E."/>
            <person name="Kamen M.D."/>
        </authorList>
    </citation>
    <scope>PROTEIN SEQUENCE</scope>
    <source>
        <strain>KIMG 8816</strain>
    </source>
</reference>
<sequence length="81" mass="8951">EDLPHVDAATNPIAQSLHYIEDANASERNPVTKTELPGSEQFCHNCSFIQADSGAWRPCTLYPGYTVSEDGWCLSWAHKTA</sequence>
<organism>
    <name type="scientific">Thiococcus pfennigii</name>
    <name type="common">Thiocapsa pfennigii</name>
    <dbReference type="NCBI Taxonomy" id="1057"/>
    <lineage>
        <taxon>Bacteria</taxon>
        <taxon>Pseudomonadati</taxon>
        <taxon>Pseudomonadota</taxon>
        <taxon>Gammaproteobacteria</taxon>
        <taxon>Chromatiales</taxon>
        <taxon>Chromatiaceae</taxon>
        <taxon>Thiococcus</taxon>
    </lineage>
</organism>
<comment type="function">
    <text>Specific class of high-redox-potential 4Fe-4S ferredoxins. Functions in anaerobic electron transport in most purple and in some other photosynthetic bacteria and in at least one genus (Paracoccus) of halophilic, denitrifying bacteria.</text>
</comment>
<comment type="subunit">
    <text evidence="2">Homodimer.</text>
</comment>
<comment type="similarity">
    <text evidence="1">Belongs to the high-potential iron-sulfur protein (HiPIP) family.</text>
</comment>
<dbReference type="PIR" id="A00266">
    <property type="entry name" value="IHTF"/>
</dbReference>
<dbReference type="SMR" id="P00263"/>
<dbReference type="GO" id="GO:0051539">
    <property type="term" value="F:4 iron, 4 sulfur cluster binding"/>
    <property type="evidence" value="ECO:0007669"/>
    <property type="project" value="UniProtKB-KW"/>
</dbReference>
<dbReference type="GO" id="GO:0009055">
    <property type="term" value="F:electron transfer activity"/>
    <property type="evidence" value="ECO:0007669"/>
    <property type="project" value="InterPro"/>
</dbReference>
<dbReference type="GO" id="GO:0046872">
    <property type="term" value="F:metal ion binding"/>
    <property type="evidence" value="ECO:0007669"/>
    <property type="project" value="UniProtKB-KW"/>
</dbReference>
<dbReference type="GO" id="GO:0019646">
    <property type="term" value="P:aerobic electron transport chain"/>
    <property type="evidence" value="ECO:0007669"/>
    <property type="project" value="InterPro"/>
</dbReference>
<dbReference type="Gene3D" id="4.10.490.10">
    <property type="entry name" value="High potential iron-sulphur protein"/>
    <property type="match status" value="1"/>
</dbReference>
<dbReference type="InterPro" id="IPR000170">
    <property type="entry name" value="High_potential_FeS_prot"/>
</dbReference>
<dbReference type="InterPro" id="IPR036369">
    <property type="entry name" value="HIPIP_sf"/>
</dbReference>
<dbReference type="Pfam" id="PF01355">
    <property type="entry name" value="HIPIP"/>
    <property type="match status" value="1"/>
</dbReference>
<dbReference type="SUPFAM" id="SSF57652">
    <property type="entry name" value="HIPIP (high potential iron protein)"/>
    <property type="match status" value="1"/>
</dbReference>
<dbReference type="PROSITE" id="PS51373">
    <property type="entry name" value="HIPIP"/>
    <property type="match status" value="1"/>
</dbReference>
<name>HIP_THIPF</name>
<gene>
    <name type="primary">hip</name>
</gene>
<keyword id="KW-0004">4Fe-4S</keyword>
<keyword id="KW-0903">Direct protein sequencing</keyword>
<keyword id="KW-0249">Electron transport</keyword>
<keyword id="KW-0408">Iron</keyword>
<keyword id="KW-0411">Iron-sulfur</keyword>
<keyword id="KW-0479">Metal-binding</keyword>
<keyword id="KW-0813">Transport</keyword>
<protein>
    <recommendedName>
        <fullName>High-potential iron-sulfur protein</fullName>
        <shortName>HiPIP</shortName>
    </recommendedName>
</protein>
<proteinExistence type="evidence at protein level"/>
<evidence type="ECO:0000255" key="1">
    <source>
        <dbReference type="PROSITE-ProRule" id="PRU00705"/>
    </source>
</evidence>
<evidence type="ECO:0000305" key="2"/>
<feature type="chain" id="PRO_0000220430" description="High-potential iron-sulfur protein">
    <location>
        <begin position="1"/>
        <end position="81"/>
    </location>
</feature>
<feature type="binding site" evidence="1">
    <location>
        <position position="43"/>
    </location>
    <ligand>
        <name>[4Fe-4S] cluster</name>
        <dbReference type="ChEBI" id="CHEBI:49883"/>
    </ligand>
</feature>
<feature type="binding site" evidence="1">
    <location>
        <position position="46"/>
    </location>
    <ligand>
        <name>[4Fe-4S] cluster</name>
        <dbReference type="ChEBI" id="CHEBI:49883"/>
    </ligand>
</feature>
<feature type="binding site" evidence="1">
    <location>
        <position position="59"/>
    </location>
    <ligand>
        <name>[4Fe-4S] cluster</name>
        <dbReference type="ChEBI" id="CHEBI:49883"/>
    </ligand>
</feature>
<feature type="binding site" evidence="1">
    <location>
        <position position="73"/>
    </location>
    <ligand>
        <name>[4Fe-4S] cluster</name>
        <dbReference type="ChEBI" id="CHEBI:49883"/>
    </ligand>
</feature>
<accession>P00263</accession>